<comment type="function">
    <text evidence="3">GTP hydrolase that promotes the GTP-dependent binding of aminoacyl-tRNA to the A-site of ribosomes during protein biosynthesis.</text>
</comment>
<comment type="function">
    <text>May play an important regulatory role in cell growth and in the bacterial response to nutrient deprivation.</text>
</comment>
<comment type="function">
    <text evidence="4">Plays a stimulatory role in trans-translation, binds tmRNA.</text>
</comment>
<comment type="function">
    <text evidence="2">Protects glycyl-tRNA(Gly) from hydrolysis by D-aminoacyl-tRNA deacylase (dtd) (By similarity).</text>
</comment>
<comment type="function">
    <text evidence="9 10 12 13 18 23">(Microbial infection) Upon infection by bacteriophage Qbeta, part of the viral RNA-dependent RNA polymerase complex. With EF-Ts may provide a stabilizing scaffold for the beta (catalytic) subunit. Helps separate the double-stranded RNA of the template and growing RNA during elongation (PubMed:22245970). With the beta subunit helps form the exit tunnel for template RNA. The GTPase activity of this subunit is not required for viral RNA replication (PubMed:20798060).</text>
</comment>
<comment type="catalytic activity">
    <reaction evidence="3">
        <text>GTP + H2O = GDP + phosphate + H(+)</text>
        <dbReference type="Rhea" id="RHEA:19669"/>
        <dbReference type="ChEBI" id="CHEBI:15377"/>
        <dbReference type="ChEBI" id="CHEBI:15378"/>
        <dbReference type="ChEBI" id="CHEBI:37565"/>
        <dbReference type="ChEBI" id="CHEBI:43474"/>
        <dbReference type="ChEBI" id="CHEBI:58189"/>
        <dbReference type="EC" id="3.6.5.3"/>
    </reaction>
    <physiologicalReaction direction="left-to-right" evidence="3">
        <dbReference type="Rhea" id="RHEA:19670"/>
    </physiologicalReaction>
</comment>
<comment type="subunit">
    <text evidence="3 25 26">Monomer. Heterotetramer composed of two EF-Ts.EF-Tu dimer complexes (PubMed:8596629).</text>
</comment>
<comment type="subunit">
    <text evidence="9 10 12 13 18 23">(Microbial infection) Upon infection by bacteriophage Qbeta, part of the viral RNA-dependent RNA polymerase complex, the other subunits are the viral replicase catalytic subunit (AC P14647), host ribosomal protein S1 and EF-Ts (PubMed:816798).</text>
</comment>
<comment type="interaction">
    <interactant intactId="EBI-9010251">
        <id>P0CE48</id>
    </interactant>
    <interactant intactId="EBI-301164">
        <id>P0A6P1</id>
        <label>tsf</label>
    </interactant>
    <organismsDiffer>false</organismsDiffer>
    <experiments>3</experiments>
</comment>
<comment type="subcellular location">
    <subcellularLocation>
        <location>Cytoplasm</location>
    </subcellularLocation>
    <subcellularLocation>
        <location>Cell inner membrane</location>
        <topology>Peripheral membrane protein</topology>
    </subcellularLocation>
    <text>Between 50-80% of the protein is associated with the cell inner membrane. Localization to the membrane has been suggested to follow nutrient stress.</text>
</comment>
<comment type="PTM">
    <text>The N-terminus is blocked.</text>
</comment>
<comment type="PTM">
    <text evidence="8 20 21 22">Methylated in vivo on Lys-57 in response to nutrient starvation.</text>
</comment>
<comment type="PTM">
    <text evidence="7 15 24">Phosphorylated in vitro by phage protein doc on Thr-383.</text>
</comment>
<comment type="PTM">
    <text evidence="7 14 15 24">Phosphorylated in vitro by HipA on Thr-383 (PubMed:19150849), this has since been reported not to occur in vivo (PubMed:24095282).</text>
</comment>
<comment type="miscellaneous">
    <text evidence="5 10 12 13 18">In order to produce high amounts of bacteriophage Qbeta RNA polymerase catalytic core, a fusion protein consisting of tsf-tufB-replicase with a cleavable linker between tufB and the viral replicase subunit is frequently used.</text>
</comment>
<comment type="miscellaneous">
    <text evidence="32">Present with about 70,000 molecules/cell.</text>
</comment>
<comment type="miscellaneous">
    <text evidence="29">The antibiotic kirromycin inhibits protein biosynthesis by inhibiting the release of EF-Tu from the ribosome. TufA resistance to kirromycin is conferred by mutations to Gln-125, Gly-317 and Ala-376. This has not been formally proven for tufB, but is certainly correct.</text>
</comment>
<comment type="miscellaneous">
    <text evidence="29">The antibiotic pulvomycin inhibits protein biosynthesis by disrupting the allosteric control mechanism of EF-Tu TufA resistance to pulvomycin is conferred by Arg-231, Arg-334 and Thr-335. This has not been formally proven for tufB, but is certainly correct.</text>
</comment>
<comment type="similarity">
    <text evidence="3">Belongs to the TRAFAC class translation factor GTPase superfamily. Classic translation factor GTPase family. EF-Tu/EF-1A subfamily.</text>
</comment>
<comment type="caution">
    <text evidence="29">EF-Tu 1 and EF-Tu 2 differ in a single position and are no longer merged. However, many papers are found in both entries as it is not always possible to determine for each paper which of EF-Tu 1 or EF-Tu 2 was being worked upon.</text>
</comment>
<keyword id="KW-0002">3D-structure</keyword>
<keyword id="KW-0007">Acetylation</keyword>
<keyword id="KW-0046">Antibiotic resistance</keyword>
<keyword id="KW-0997">Cell inner membrane</keyword>
<keyword id="KW-1003">Cell membrane</keyword>
<keyword id="KW-0963">Cytoplasm</keyword>
<keyword id="KW-0903">Direct protein sequencing</keyword>
<keyword id="KW-0251">Elongation factor</keyword>
<keyword id="KW-0342">GTP-binding</keyword>
<keyword id="KW-0378">Hydrolase</keyword>
<keyword id="KW-0460">Magnesium</keyword>
<keyword id="KW-0472">Membrane</keyword>
<keyword id="KW-0479">Metal-binding</keyword>
<keyword id="KW-0488">Methylation</keyword>
<keyword id="KW-0547">Nucleotide-binding</keyword>
<keyword id="KW-0597">Phosphoprotein</keyword>
<keyword id="KW-0648">Protein biosynthesis</keyword>
<keyword id="KW-1185">Reference proteome</keyword>
<keyword id="KW-0694">RNA-binding</keyword>
<reference key="1">
    <citation type="journal article" date="1980" name="Gene">
        <title>The nucleotide sequence of tufB and four nearby tRNA structural genes of Escherichia coli.</title>
        <authorList>
            <person name="An G."/>
            <person name="Friesen J.D."/>
        </authorList>
    </citation>
    <scope>NUCLEOTIDE SEQUENCE [GENOMIC DNA]</scope>
</reference>
<reference key="2">
    <citation type="journal article" date="1993" name="Nucleic Acids Res.">
        <title>Analysis of the Escherichia coli genome. IV. DNA sequence of the region from 89.2 to 92.8 minutes.</title>
        <authorList>
            <person name="Blattner F.R."/>
            <person name="Burland V.D."/>
            <person name="Plunkett G. III"/>
            <person name="Sofia H.J."/>
            <person name="Daniels D.L."/>
        </authorList>
    </citation>
    <scope>NUCLEOTIDE SEQUENCE [LARGE SCALE GENOMIC DNA]</scope>
    <source>
        <strain>K12 / MG1655 / ATCC 47076</strain>
    </source>
</reference>
<reference key="3">
    <citation type="journal article" date="1997" name="Science">
        <title>The complete genome sequence of Escherichia coli K-12.</title>
        <authorList>
            <person name="Blattner F.R."/>
            <person name="Plunkett G. III"/>
            <person name="Bloch C.A."/>
            <person name="Perna N.T."/>
            <person name="Burland V."/>
            <person name="Riley M."/>
            <person name="Collado-Vides J."/>
            <person name="Glasner J.D."/>
            <person name="Rode C.K."/>
            <person name="Mayhew G.F."/>
            <person name="Gregor J."/>
            <person name="Davis N.W."/>
            <person name="Kirkpatrick H.A."/>
            <person name="Goeden M.A."/>
            <person name="Rose D.J."/>
            <person name="Mau B."/>
            <person name="Shao Y."/>
        </authorList>
    </citation>
    <scope>NUCLEOTIDE SEQUENCE [LARGE SCALE GENOMIC DNA]</scope>
    <source>
        <strain>K12 / MG1655 / ATCC 47076</strain>
    </source>
</reference>
<reference key="4">
    <citation type="journal article" date="2006" name="Mol. Syst. Biol.">
        <title>Highly accurate genome sequences of Escherichia coli K-12 strains MG1655 and W3110.</title>
        <authorList>
            <person name="Hayashi K."/>
            <person name="Morooka N."/>
            <person name="Yamamoto Y."/>
            <person name="Fujita K."/>
            <person name="Isono K."/>
            <person name="Choi S."/>
            <person name="Ohtsubo E."/>
            <person name="Baba T."/>
            <person name="Wanner B.L."/>
            <person name="Mori H."/>
            <person name="Horiuchi T."/>
        </authorList>
    </citation>
    <scope>NUCLEOTIDE SEQUENCE [LARGE SCALE GENOMIC DNA]</scope>
    <source>
        <strain>K12 / W3110 / ATCC 27325 / DSM 5911</strain>
    </source>
</reference>
<reference key="5">
    <citation type="journal article" date="1980" name="Eur. J. Biochem.">
        <title>The complete amino-acid sequence of elongation factor Tu from Escherichia coli.</title>
        <authorList>
            <person name="Jones M.D."/>
            <person name="Petersen T.E."/>
            <person name="Nielsen K.M."/>
            <person name="Magnusson S."/>
            <person name="Sottrup-Jensen L."/>
            <person name="Gausing K."/>
            <person name="Clark B.F.C."/>
        </authorList>
    </citation>
    <scope>PROTEIN SEQUENCE OF 2-394</scope>
    <scope>ACETYLATION AT SER-2</scope>
    <scope>METHYLATION AT LYS-57</scope>
    <source>
        <strain>B</strain>
    </source>
</reference>
<reference key="6">
    <citation type="journal article" date="1981" name="J. Biol. Chem.">
        <title>The amino acid sequence of elongation factor Tu of Escherichia coli. The complete sequence.</title>
        <authorList>
            <person name="Laursen R.A."/>
            <person name="L'Italien J.J."/>
            <person name="Nagarkatti S."/>
            <person name="Miller D.L."/>
        </authorList>
    </citation>
    <scope>PROTEIN SEQUENCE OF 2-394</scope>
    <scope>ACETYLATION AT SER-2</scope>
    <scope>METHYLATION AT LYS-57</scope>
</reference>
<reference key="7">
    <citation type="journal article" date="1981" name="Mol. Gen. Genet.">
        <title>Transcription of the E. coli tufB gene: cotranscription with four tRNA genes and inhibition by guanosine-5'-diphosphate-3'-diphosphate.</title>
        <authorList>
            <person name="Miyajima A."/>
            <person name="Shibuya M."/>
            <person name="Kuchino Y."/>
            <person name="Kaziro Y."/>
        </authorList>
    </citation>
    <scope>NUCLEOTIDE SEQUENCE [GENOMIC DNA] OF 1-21</scope>
</reference>
<reference key="8">
    <citation type="journal article" date="1991" name="J. Bacteriol.">
        <title>Elongation factor Tu is methylated in response to nutrient deprivation in Escherichia coli.</title>
        <authorList>
            <person name="Young C.C."/>
            <person name="Bernlohr R.W."/>
        </authorList>
    </citation>
    <scope>PROTEIN SEQUENCE OF 153-176 AND 262-290</scope>
    <scope>METHYLATION AT LYS-57 IN RESPONSE TO NUTRIENT STARVATION</scope>
    <scope>SUBCELLULAR LOCATION</scope>
    <source>
        <strain>B/R</strain>
    </source>
</reference>
<reference key="9">
    <citation type="journal article" date="1997" name="Electrophoresis">
        <title>Comparing the predicted and observed properties of proteins encoded in the genome of Escherichia coli K-12.</title>
        <authorList>
            <person name="Link A.J."/>
            <person name="Robison K."/>
            <person name="Church G.M."/>
        </authorList>
    </citation>
    <scope>PROTEIN SEQUENCE OF 311-322</scope>
    <scope>BLOCKAGE OF N-TERMINUS</scope>
    <source>
        <strain>K12 / EMG2</strain>
    </source>
</reference>
<reference key="10">
    <citation type="journal article" date="1976" name="Nature">
        <title>Abundance and membrane association of elongation factor Tu in E. coli.</title>
        <authorList>
            <person name="Jacobson G.R."/>
            <person name="Rosenbusch J.P."/>
        </authorList>
    </citation>
    <scope>BLOCKAGE OF N-TERMINUS</scope>
    <scope>SUBCELLULAR LOCATION</scope>
    <source>
        <strain>K12 / BHB 960</strain>
    </source>
</reference>
<reference key="11">
    <citation type="journal article" date="1976" name="J. Biol. Chem.">
        <title>Immunochemical analysis of the functions of the subunits of phage Qbeta ribonucleic acid replicase.</title>
        <authorList>
            <person name="Carmichael G.G."/>
            <person name="Landers T.A."/>
            <person name="Weber K."/>
        </authorList>
    </citation>
    <scope>FUNCTION IN VIRAL RNA REPLICATION</scope>
    <scope>SUBUNIT</scope>
</reference>
<reference key="12">
    <citation type="journal article" date="1993" name="J. Biol. Chem.">
        <title>Prokaryotic elongation factor Tu is phosphorylated in vivo.</title>
        <authorList>
            <person name="Lippmann C."/>
            <person name="Lindschau C."/>
            <person name="Vijgenboom E."/>
            <person name="Schroeder W."/>
            <person name="Bosch L."/>
            <person name="Erdmann V.A."/>
        </authorList>
    </citation>
    <scope>PHOSPHORYLATION AT THR-383</scope>
    <scope>PROTEIN SEQUENCE OF 290-304 AND 383-391</scope>
</reference>
<reference key="13">
    <citation type="journal article" date="1979" name="FEBS Lett.">
        <title>Location of the site of methylation in elongation factor Tu.</title>
        <authorList>
            <person name="L'Italien J.J."/>
            <person name="Laursen R.A."/>
        </authorList>
    </citation>
    <scope>METHYLATION AT LYS-57</scope>
</reference>
<reference key="14">
    <citation type="journal article" date="1987" name="J. Biol. Chem.">
        <title>A mutation that alters the nucleotide specificity of elongation factor Tu, a GTP regulatory protein.</title>
        <authorList>
            <person name="Hwang Y.-W."/>
            <person name="Miller D.L."/>
        </authorList>
    </citation>
    <scope>MUTAGENESIS OF ASP-139</scope>
</reference>
<reference key="15">
    <citation type="journal article" date="1989" name="J. Biol. Chem.">
        <title>Mutagenesis of bacterial elongation factor Tu at lysine 136. A conserved amino acid in GTP regulatory proteins.</title>
        <authorList>
            <person name="Hwang Y.-W."/>
            <person name="Sanchez A."/>
            <person name="Miller D.L."/>
        </authorList>
    </citation>
    <scope>MUTAGENESIS OF LYS-137</scope>
</reference>
<reference key="16">
    <citation type="journal article" date="1989" name="Arch. Biochem. Biophys.">
        <title>Site-directed mutagenesis of the GDP binding domain of bacterial elongation factor Tu.</title>
        <authorList>
            <person name="Hwang Y.-W."/>
            <person name="McCabe P.G."/>
            <person name="Innis M.A."/>
            <person name="Miller D.L."/>
        </authorList>
    </citation>
    <scope>MUTAGENESIS</scope>
</reference>
<reference key="17">
    <citation type="journal article" date="1996" name="EMBO J.">
        <title>The G222D mutation in elongation factor Tu inhibits the codon-induced conformational changes leading to GTPase activation on the ribosome.</title>
        <authorList>
            <person name="Vorstenbosch E."/>
            <person name="Pape T."/>
            <person name="Rodnina M.V."/>
            <person name="Kraal B."/>
            <person name="Wintermeyer W."/>
        </authorList>
    </citation>
    <scope>CHARACTERIZATION OF MUTANT ASP-223</scope>
</reference>
<reference key="18">
    <citation type="journal article" date="1997" name="Electrophoresis">
        <title>Escherichia coli proteome analysis using the gene-protein database.</title>
        <authorList>
            <person name="VanBogelen R.A."/>
            <person name="Abshire K.Z."/>
            <person name="Moldover B."/>
            <person name="Olson E.R."/>
            <person name="Neidhardt F.C."/>
        </authorList>
    </citation>
    <scope>IDENTIFICATION BY 2D-GEL</scope>
</reference>
<reference key="19">
    <citation type="journal article" date="1998" name="J. Biol. Chem.">
        <title>Mutational analysis of the roles of residues in Escherichia coli elongation factor Ts in the interaction with elongation factor Tu.</title>
        <authorList>
            <person name="Zhang Y."/>
            <person name="Yu N.-J."/>
            <person name="Spremulli L.L."/>
        </authorList>
    </citation>
    <scope>MUTAGENESIS OF HIS-20; GLN-115 AND GLU-349</scope>
</reference>
<reference key="20">
    <citation type="journal article" date="2004" name="J. Biol. Chem.">
        <title>Pre-binding of small protein B to a stalled ribosome triggers trans-translation.</title>
        <authorList>
            <person name="Hallier M."/>
            <person name="Ivanova N."/>
            <person name="Rametti A."/>
            <person name="Pavlov M."/>
            <person name="Ehrenberg M."/>
            <person name="Felden B."/>
        </authorList>
    </citation>
    <scope>FUNCTION IN TRANS-TRANSLATION</scope>
    <scope>TMRNA-BINDING</scope>
    <source>
        <strain>K12 / BW25113</strain>
    </source>
</reference>
<reference key="21">
    <citation type="journal article" date="2006" name="J. Biosci. Bioeng.">
        <title>Functional Qbeta replicase genetically fusing essential subunits EF-Ts and EF-Tu with beta-subunit.</title>
        <authorList>
            <person name="Kita H."/>
            <person name="Cho J."/>
            <person name="Matsuura T."/>
            <person name="Nakaishi T."/>
            <person name="Taniguchi I."/>
            <person name="Ichikawa T."/>
            <person name="Shima Y."/>
            <person name="Urabe I."/>
            <person name="Yomo T."/>
        </authorList>
    </citation>
    <scope>CONSTRUCT TO PRODUCE QBETA VIRAL CATALYTIC CORE</scope>
    <source>
        <strain>A/lambda</strain>
    </source>
</reference>
<reference key="22">
    <citation type="journal article" date="2009" name="Mol. Cell. Proteomics">
        <title>Lysine acetylation is a highly abundant and evolutionarily conserved modification in Escherichia coli.</title>
        <authorList>
            <person name="Zhang J."/>
            <person name="Sprung R."/>
            <person name="Pei J."/>
            <person name="Tan X."/>
            <person name="Kim S."/>
            <person name="Zhu H."/>
            <person name="Liu C.F."/>
            <person name="Grishin N.V."/>
            <person name="Zhao Y."/>
        </authorList>
    </citation>
    <scope>ACETYLATION [LARGE SCALE ANALYSIS] AT LYS-314</scope>
    <scope>IDENTIFICATION BY MASS SPECTROMETRY</scope>
    <source>
        <strain>K12 / JW1106</strain>
        <strain>K12 / MG1655 / ATCC 47076</strain>
    </source>
</reference>
<reference key="23">
    <citation type="journal article" date="2009" name="Science">
        <title>Molecular mechanisms of HipA-mediated multidrug tolerance and its neutralization by HipB.</title>
        <authorList>
            <person name="Schumacher M.A."/>
            <person name="Piro K.M."/>
            <person name="Xu W."/>
            <person name="Hansen S."/>
            <person name="Lewis K."/>
            <person name="Brennan R.G."/>
        </authorList>
    </citation>
    <scope>PHOSPHORYLATION AT THR-383 BY HIPA</scope>
</reference>
<reference key="24">
    <citation type="journal article" date="2011" name="Nat. Chem. Biol.">
        <title>Identification of lysine succinylation as a new post-translational modification.</title>
        <authorList>
            <person name="Zhang Z."/>
            <person name="Tan M."/>
            <person name="Xie Z."/>
            <person name="Dai L."/>
            <person name="Chen Y."/>
            <person name="Zhao Y."/>
        </authorList>
    </citation>
    <scope>SUCCINYLATION AT LYS-38; LYS-177; LYS-249; LYS-253; LYS-295 AND LYS-314</scope>
    <source>
        <strain>K12</strain>
    </source>
</reference>
<reference key="25">
    <citation type="journal article" date="2013" name="Mol. Cell">
        <title>Molecular mechanism of bacterial persistence by HipA.</title>
        <authorList>
            <person name="Germain E."/>
            <person name="Castro-Roa D."/>
            <person name="Zenkin N."/>
            <person name="Gerdes K."/>
        </authorList>
    </citation>
    <scope>LACK OF PHOSPHORYLATION BY HIPA</scope>
    <source>
        <strain>K12 / MG1655 / ATCC 47076</strain>
    </source>
</reference>
<reference key="26">
    <citation type="journal article" date="2013" name="Nat. Chem. Biol.">
        <title>The Fic protein Doc uses an inverted substrate to phosphorylate and inactivate EF-Tu.</title>
        <authorList>
            <person name="Castro-Roa D."/>
            <person name="Garcia-Pino A."/>
            <person name="De Gieter S."/>
            <person name="van Nuland N.A."/>
            <person name="Loris R."/>
            <person name="Zenkin N."/>
        </authorList>
    </citation>
    <scope>PHOSPHORYLATION AT THR-383 BY DOC</scope>
    <scope>MUTAGENESIS OF THR-383</scope>
</reference>
<reference key="27">
    <citation type="journal article" date="1985" name="Science">
        <title>Structure of the GDP domain of EF-Tu and location of the amino acids homologous to ras oncogene proteins.</title>
        <authorList>
            <person name="Jurnak F."/>
        </authorList>
    </citation>
    <scope>X-RAY CRYSTALLOGRAPHY (2.7 ANGSTROMS) OF 2-394 OF A TRYPSIN-MODIFIED EF-TU-GDP</scope>
</reference>
<reference key="28">
    <citation type="journal article" date="1992" name="J. Mol. Biol.">
        <title>Refined structure of elongation factor EF-Tu from Escherichia coli.</title>
        <authorList>
            <person name="Kjeldgaard M."/>
            <person name="Nyborg J."/>
        </authorList>
    </citation>
    <scope>X-RAY CRYSTALLOGRAPHY (2.6 ANGSTROMS)</scope>
</reference>
<reference key="29">
    <citation type="journal article" date="1996" name="Nature">
        <title>The structure of the Escherichia coli EF-Tu.EF-Ts complex at 2.5-A resolution.</title>
        <authorList>
            <person name="Kawashima T."/>
            <person name="Berthet-Colominas C."/>
            <person name="Wulff M."/>
            <person name="Cusack S."/>
            <person name="Leberman R."/>
        </authorList>
    </citation>
    <scope>X-RAY CRYSTALLOGRAPHY (2.5 ANGSTROMS) OF 10-394 IN COMPLEX WITH EF-TS</scope>
</reference>
<reference key="30">
    <citation type="journal article" date="1996" name="Nature">
        <authorList>
            <person name="Kawashima T."/>
            <person name="Berthet-Colominas C."/>
            <person name="Wulff M."/>
            <person name="Cusack S."/>
            <person name="Leberman R."/>
        </authorList>
    </citation>
    <scope>ERRATUM OF PUBMED:8596629</scope>
</reference>
<reference key="31">
    <citation type="journal article" date="1996" name="Structure">
        <title>An alpha to beta conformational switch in EF-Tu.</title>
        <authorList>
            <person name="Abel K."/>
            <person name="Yoder M.D."/>
            <person name="Hilgenfeld R."/>
            <person name="Jurnak F."/>
        </authorList>
    </citation>
    <scope>X-RAY CRYSTALLOGRAPHY (2.5 ANGSTROMS) IN COMPLEX WITH GDP AND ANTIBIOTIC GE2270A</scope>
</reference>
<reference key="32">
    <citation type="journal article" date="1999" name="J. Mol. Biol.">
        <title>Crystal structure of intact elongation factor EF-Tu from Escherichia coli in GDP conformation at 2.05-A resolution.</title>
        <authorList>
            <person name="Song H."/>
            <person name="Parsons M.R."/>
            <person name="Rowsell S."/>
            <person name="Leonard G."/>
            <person name="Phillips S.E.V."/>
        </authorList>
    </citation>
    <scope>X-RAY CRYSTALLOGRAPHY (2.05 ANGSTROMS)</scope>
</reference>
<reference key="33">
    <citation type="journal article" date="2002" name="EMBO J.">
        <title>Cryo-EM reveals an active role for aminoacyl-tRNA in the accommodation process.</title>
        <authorList>
            <person name="Valle M."/>
            <person name="Sengupta J."/>
            <person name="Swami N.K."/>
            <person name="Grassucci R.A."/>
            <person name="Burkhardt N."/>
            <person name="Nierhaus K.H."/>
            <person name="Agrawal R.K."/>
            <person name="Frank J."/>
        </authorList>
    </citation>
    <scope>STRUCTURE BY ELECTRON MICROSCOPY (16.8 ANGSTROMS) OF 2-393 IN THE 70S RIBOSOME</scope>
</reference>
<reference key="34">
    <citation type="journal article" date="2003" name="Nat. Struct. Biol.">
        <title>Incorporation of aminoacyl-tRNA into the ribosome as seen by cryo-electron microscopy.</title>
        <authorList>
            <person name="Valle M."/>
            <person name="Zavialov A."/>
            <person name="Li W."/>
            <person name="Stagg S.M."/>
            <person name="Sengupta J."/>
            <person name="Nielsen R.C."/>
            <person name="Nissen P."/>
            <person name="Harvey S.C."/>
            <person name="Ehrenberg M."/>
            <person name="Frank J."/>
        </authorList>
    </citation>
    <scope>X-RAY CRYSTALLOGRAPHY (3.35 ANGSTROMS) OF 3-394</scope>
    <scope>STRUCTURE BY ELECTRON MICROSCOPY (10.0 ANGSTROMS) OF 2-393 IN COMPLEX WITH THE 70S RIBOSOME</scope>
</reference>
<reference key="35">
    <citation type="journal article" date="2006" name="J. Biol. Chem.">
        <title>Enacyloxin IIa pinpoints a binding pocket of elongation factor Tu for development of novel antibiotics.</title>
        <authorList>
            <person name="Parmeggiani A."/>
            <person name="Krab I.M."/>
            <person name="Watanabe T."/>
            <person name="Nielsen R.C."/>
            <person name="Dahlberg C."/>
            <person name="Nyborg J."/>
            <person name="Nissen P."/>
        </authorList>
    </citation>
    <scope>X-RAY CRYSTALLOGRAPHY (2.3 ANGSTROMS) OF 2-394 OF EF-TU-GUANYLYL IMINODIPHOSPHATE (GDPNP) ENACYLOXIN IIA COMPLEX</scope>
</reference>
<reference key="36">
    <citation type="journal article" date="2010" name="Proc. Natl. Acad. Sci. U.S.A.">
        <title>Structure of the Qbeta replicase, an RNA-dependent RNA polymerase consisting of viral and host proteins.</title>
        <authorList>
            <person name="Kidmose R.T."/>
            <person name="Vasiliev N.N."/>
            <person name="Chetverin A.B."/>
            <person name="Andersen G.R."/>
            <person name="Knudsen C.R."/>
        </authorList>
    </citation>
    <scope>X-RAY CRYSTALLOGRAPHY (2.50 ANGSTROMS) IN QBETA VIRUS RNA POLYMERASE CATALYTIC CORE</scope>
    <scope>FUNCTION IN VIRAL RNA REPLICATION</scope>
    <scope>SUBUNIT</scope>
</reference>
<reference key="37">
    <citation type="journal article" date="2010" name="Proc. Natl. Acad. Sci. U.S.A.">
        <title>Assembly of Q{beta} viral RNA polymerase with host translational elongation factors EF-Tu and -Ts.</title>
        <authorList>
            <person name="Takeshita D."/>
            <person name="Tomita K."/>
        </authorList>
    </citation>
    <scope>X-RAY CRYSTALLOGRAPHY (2.80 ANGSTROMS) IN QBETA VIRUS RNA POLYMERASE CATALYTIC CORE</scope>
    <scope>FUNCTION IN VIRAL RNA REPLICATION</scope>
    <scope>SUBUNIT</scope>
    <scope>MUTAGENESIS OF PHE-262 AND 262-PHE-ARG-263</scope>
</reference>
<reference key="38">
    <citation type="journal article" date="2012" name="Nat. Struct. Mol. Biol.">
        <title>Molecular basis for RNA polymerization by Qbeta replicase.</title>
        <authorList>
            <person name="Takeshita D."/>
            <person name="Tomita K."/>
        </authorList>
    </citation>
    <scope>X-RAY CRYSTALLOGRAPHY (2.41 ANGSTROMS) IN QBETA VIRUS RNA POLYMERASE CATALYTIC CORE</scope>
    <scope>FUNCTION IN VIRAL RNA REPLICATION</scope>
    <scope>SUBUNIT</scope>
    <scope>MUTAGENESIS OF ARG-289; ARG-378 AND ARG-382</scope>
</reference>
<reference key="39">
    <citation type="journal article" date="2012" name="Structure">
        <title>Mechanism for template-independent terminal adenylation activity of Qbeta replicase.</title>
        <authorList>
            <person name="Takeshita D."/>
            <person name="Yamashita S."/>
            <person name="Tomita K."/>
        </authorList>
    </citation>
    <scope>X-RAY CRYSTALLOGRAPHY (2.60 ANGSTROMS) IN QBETA VIRUS RNA POLYMERASE CATALYTIC CORE</scope>
    <scope>FUNCTION IN VIRAL RNA REPLICATION</scope>
    <scope>SUBUNIT</scope>
</reference>
<reference key="40">
    <citation type="journal article" date="2014" name="Nucleic Acids Res.">
        <title>Molecular insights into replication initiation by Qbeta replicase using ribosomal protein S1.</title>
        <authorList>
            <person name="Takeshita D."/>
            <person name="Yamashita S."/>
            <person name="Tomita K."/>
        </authorList>
    </citation>
    <scope>X-RAY CRYSTALLOGRAPHY (2.90 ANGSTROMS) IN QBETA VIRUS RNA POLYMERASE</scope>
    <scope>FUNCTION IN VIRAL RNA REPLICATION</scope>
    <scope>SUBUNIT</scope>
    <source>
        <strain>K12 / W3110 / ATCC 27325 / DSM 5911</strain>
    </source>
</reference>
<gene>
    <name evidence="3" type="primary">tufB</name>
    <name type="ordered locus">b3980</name>
    <name type="ordered locus">JW3943</name>
</gene>
<evidence type="ECO:0000250" key="1"/>
<evidence type="ECO:0000250" key="2">
    <source>
        <dbReference type="UniProtKB" id="Q5SHN6"/>
    </source>
</evidence>
<evidence type="ECO:0000255" key="3">
    <source>
        <dbReference type="HAMAP-Rule" id="MF_00118"/>
    </source>
</evidence>
<evidence type="ECO:0000269" key="4">
    <source>
    </source>
</evidence>
<evidence type="ECO:0000269" key="5">
    <source>
    </source>
</evidence>
<evidence type="ECO:0000269" key="6">
    <source>
    </source>
</evidence>
<evidence type="ECO:0000269" key="7">
    <source>
    </source>
</evidence>
<evidence type="ECO:0000269" key="8">
    <source>
    </source>
</evidence>
<evidence type="ECO:0000269" key="9">
    <source>
    </source>
</evidence>
<evidence type="ECO:0000269" key="10">
    <source>
    </source>
</evidence>
<evidence type="ECO:0000269" key="11">
    <source>
    </source>
</evidence>
<evidence type="ECO:0000269" key="12">
    <source>
    </source>
</evidence>
<evidence type="ECO:0000269" key="13">
    <source>
    </source>
</evidence>
<evidence type="ECO:0000269" key="14">
    <source>
    </source>
</evidence>
<evidence type="ECO:0000269" key="15">
    <source>
    </source>
</evidence>
<evidence type="ECO:0000269" key="16">
    <source>
    </source>
</evidence>
<evidence type="ECO:0000269" key="17">
    <source>
    </source>
</evidence>
<evidence type="ECO:0000269" key="18">
    <source>
    </source>
</evidence>
<evidence type="ECO:0000269" key="19">
    <source>
    </source>
</evidence>
<evidence type="ECO:0000269" key="20">
    <source>
    </source>
</evidence>
<evidence type="ECO:0000269" key="21">
    <source>
    </source>
</evidence>
<evidence type="ECO:0000269" key="22">
    <source>
    </source>
</evidence>
<evidence type="ECO:0000269" key="23">
    <source>
    </source>
</evidence>
<evidence type="ECO:0000269" key="24">
    <source>
    </source>
</evidence>
<evidence type="ECO:0000269" key="25">
    <source>
    </source>
</evidence>
<evidence type="ECO:0000269" key="26">
    <source>
    </source>
</evidence>
<evidence type="ECO:0000269" key="27">
    <source>
    </source>
</evidence>
<evidence type="ECO:0000303" key="28">
    <source>
    </source>
</evidence>
<evidence type="ECO:0000305" key="29"/>
<evidence type="ECO:0000305" key="30">
    <source>
    </source>
</evidence>
<evidence type="ECO:0000305" key="31">
    <source>
    </source>
</evidence>
<evidence type="ECO:0000305" key="32">
    <source>
    </source>
</evidence>
<evidence type="ECO:0000305" key="33">
    <source>
    </source>
</evidence>
<evidence type="ECO:0007829" key="34">
    <source>
        <dbReference type="PDB" id="2BVN"/>
    </source>
</evidence>
<evidence type="ECO:0007829" key="35">
    <source>
        <dbReference type="PDB" id="4R71"/>
    </source>
</evidence>
<evidence type="ECO:0007829" key="36">
    <source>
        <dbReference type="PDB" id="6EZE"/>
    </source>
</evidence>
<accession>P0CE48</accession>
<accession>O68929</accession>
<accession>P02990</accession>
<accession>P0A6N1</accession>
<accession>Q2M704</accession>
<accession>Q2M8R6</accession>
<accession>Q8X4S9</accession>
<accession>Q8XED3</accession>
<dbReference type="EC" id="3.6.5.3" evidence="3"/>
<dbReference type="EMBL" id="X57091">
    <property type="protein sequence ID" value="CAA40370.1"/>
    <property type="molecule type" value="Genomic_DNA"/>
</dbReference>
<dbReference type="EMBL" id="J01717">
    <property type="protein sequence ID" value="AAA24669.1"/>
    <property type="molecule type" value="Genomic_DNA"/>
</dbReference>
<dbReference type="EMBL" id="U00006">
    <property type="protein sequence ID" value="AAC43078.1"/>
    <property type="molecule type" value="Genomic_DNA"/>
</dbReference>
<dbReference type="EMBL" id="U00096">
    <property type="protein sequence ID" value="AAC76954.1"/>
    <property type="molecule type" value="Genomic_DNA"/>
</dbReference>
<dbReference type="EMBL" id="AP009048">
    <property type="protein sequence ID" value="BAE77340.1"/>
    <property type="molecule type" value="Genomic_DNA"/>
</dbReference>
<dbReference type="PIR" id="A91478">
    <property type="entry name" value="EFECT"/>
</dbReference>
<dbReference type="RefSeq" id="NP_418407.1">
    <property type="nucleotide sequence ID" value="NC_000913.3"/>
</dbReference>
<dbReference type="PDB" id="1DG1">
    <property type="method" value="X-ray"/>
    <property type="resolution" value="2.50 A"/>
    <property type="chains" value="G/H=1-394"/>
</dbReference>
<dbReference type="PDB" id="1EFM">
    <property type="method" value="X-ray"/>
    <property type="resolution" value="2.70 A"/>
    <property type="chains" value="A=2-394"/>
</dbReference>
<dbReference type="PDB" id="1EFU">
    <property type="method" value="X-ray"/>
    <property type="resolution" value="2.50 A"/>
    <property type="chains" value="A/C=10-394"/>
</dbReference>
<dbReference type="PDB" id="1LS2">
    <property type="method" value="EM"/>
    <property type="resolution" value="16.80 A"/>
    <property type="chains" value="A=2-394"/>
</dbReference>
<dbReference type="PDB" id="1OB2">
    <property type="method" value="X-ray"/>
    <property type="resolution" value="3.35 A"/>
    <property type="chains" value="A=3-394"/>
</dbReference>
<dbReference type="PDB" id="1QZD">
    <property type="method" value="EM"/>
    <property type="chains" value="A=2-394"/>
</dbReference>
<dbReference type="PDB" id="2BVN">
    <property type="method" value="X-ray"/>
    <property type="resolution" value="2.30 A"/>
    <property type="chains" value="A/B=2-394"/>
</dbReference>
<dbReference type="PDB" id="3AGP">
    <property type="method" value="X-ray"/>
    <property type="resolution" value="2.80 A"/>
    <property type="chains" value="A=1-394"/>
</dbReference>
<dbReference type="PDB" id="3AGQ">
    <property type="method" value="X-ray"/>
    <property type="resolution" value="3.22 A"/>
    <property type="chains" value="A=1-394"/>
</dbReference>
<dbReference type="PDB" id="3AVT">
    <property type="method" value="X-ray"/>
    <property type="resolution" value="2.61 A"/>
    <property type="chains" value="A=1-394"/>
</dbReference>
<dbReference type="PDB" id="3AVU">
    <property type="method" value="X-ray"/>
    <property type="resolution" value="2.91 A"/>
    <property type="chains" value="A=1-394"/>
</dbReference>
<dbReference type="PDB" id="3AVV">
    <property type="method" value="X-ray"/>
    <property type="resolution" value="3.12 A"/>
    <property type="chains" value="A=1-394"/>
</dbReference>
<dbReference type="PDB" id="3AVW">
    <property type="method" value="X-ray"/>
    <property type="resolution" value="2.60 A"/>
    <property type="chains" value="A=1-394"/>
</dbReference>
<dbReference type="PDB" id="3AVX">
    <property type="method" value="X-ray"/>
    <property type="resolution" value="2.41 A"/>
    <property type="chains" value="A=1-394"/>
</dbReference>
<dbReference type="PDB" id="3AVY">
    <property type="method" value="X-ray"/>
    <property type="resolution" value="2.62 A"/>
    <property type="chains" value="A=1-394"/>
</dbReference>
<dbReference type="PDB" id="3MMP">
    <property type="method" value="X-ray"/>
    <property type="resolution" value="2.50 A"/>
    <property type="chains" value="A/C=1-394"/>
</dbReference>
<dbReference type="PDB" id="3VNU">
    <property type="method" value="X-ray"/>
    <property type="resolution" value="3.20 A"/>
    <property type="chains" value="A=1-394"/>
</dbReference>
<dbReference type="PDB" id="3VNV">
    <property type="method" value="X-ray"/>
    <property type="resolution" value="2.60 A"/>
    <property type="chains" value="A=1-394"/>
</dbReference>
<dbReference type="PDB" id="4FWT">
    <property type="method" value="X-ray"/>
    <property type="resolution" value="3.20 A"/>
    <property type="chains" value="A=1-394"/>
</dbReference>
<dbReference type="PDB" id="4R71">
    <property type="method" value="X-ray"/>
    <property type="resolution" value="3.21 A"/>
    <property type="chains" value="A/C=1-394"/>
</dbReference>
<dbReference type="PDB" id="4V6K">
    <property type="method" value="EM"/>
    <property type="resolution" value="8.25 A"/>
    <property type="chains" value="BC=2-394"/>
</dbReference>
<dbReference type="PDB" id="4V6L">
    <property type="method" value="EM"/>
    <property type="resolution" value="13.20 A"/>
    <property type="chains" value="AC=2-394"/>
</dbReference>
<dbReference type="PDB" id="5AFI">
    <property type="method" value="EM"/>
    <property type="resolution" value="2.90 A"/>
    <property type="chains" value="z=2-394"/>
</dbReference>
<dbReference type="PDB" id="5I4R">
    <property type="method" value="X-ray"/>
    <property type="resolution" value="3.30 A"/>
    <property type="chains" value="C/G=1-45"/>
</dbReference>
<dbReference type="PDB" id="5WDT">
    <property type="method" value="EM"/>
    <property type="resolution" value="3.00 A"/>
    <property type="chains" value="z=2-394"/>
</dbReference>
<dbReference type="PDB" id="5WE4">
    <property type="method" value="EM"/>
    <property type="resolution" value="3.10 A"/>
    <property type="chains" value="z=2-394"/>
</dbReference>
<dbReference type="PDB" id="5WE6">
    <property type="method" value="EM"/>
    <property type="resolution" value="3.40 A"/>
    <property type="chains" value="z=2-394"/>
</dbReference>
<dbReference type="PDB" id="5WF0">
    <property type="method" value="EM"/>
    <property type="resolution" value="3.60 A"/>
    <property type="chains" value="z=2-394"/>
</dbReference>
<dbReference type="PDB" id="5WFK">
    <property type="method" value="EM"/>
    <property type="resolution" value="3.40 A"/>
    <property type="chains" value="z=2-394"/>
</dbReference>
<dbReference type="PDB" id="5WFS">
    <property type="method" value="EM"/>
    <property type="resolution" value="3.00 A"/>
    <property type="chains" value="z=2-394"/>
</dbReference>
<dbReference type="PDB" id="6EZE">
    <property type="method" value="X-ray"/>
    <property type="resolution" value="2.47 A"/>
    <property type="chains" value="A/B=1-394"/>
</dbReference>
<dbReference type="PDB" id="7ABZ">
    <property type="method" value="EM"/>
    <property type="resolution" value="3.21 A"/>
    <property type="chains" value="6=1-394"/>
</dbReference>
<dbReference type="PDB" id="7VMC">
    <property type="method" value="X-ray"/>
    <property type="resolution" value="3.41 A"/>
    <property type="chains" value="A=1-394"/>
</dbReference>
<dbReference type="PDB" id="8G7Q">
    <property type="method" value="EM"/>
    <property type="resolution" value="3.10 A"/>
    <property type="chains" value="z=2-393"/>
</dbReference>
<dbReference type="PDB" id="8QFS">
    <property type="method" value="EM"/>
    <property type="resolution" value="2.70 A"/>
    <property type="chains" value="C=1-394"/>
</dbReference>
<dbReference type="PDB" id="8QHC">
    <property type="method" value="EM"/>
    <property type="resolution" value="3.10 A"/>
    <property type="chains" value="C=1-394"/>
</dbReference>
<dbReference type="PDBsum" id="1DG1"/>
<dbReference type="PDBsum" id="1EFM"/>
<dbReference type="PDBsum" id="1EFU"/>
<dbReference type="PDBsum" id="1LS2"/>
<dbReference type="PDBsum" id="1OB2"/>
<dbReference type="PDBsum" id="1QZD"/>
<dbReference type="PDBsum" id="2BVN"/>
<dbReference type="PDBsum" id="3AGP"/>
<dbReference type="PDBsum" id="3AGQ"/>
<dbReference type="PDBsum" id="3AVT"/>
<dbReference type="PDBsum" id="3AVU"/>
<dbReference type="PDBsum" id="3AVV"/>
<dbReference type="PDBsum" id="3AVW"/>
<dbReference type="PDBsum" id="3AVX"/>
<dbReference type="PDBsum" id="3AVY"/>
<dbReference type="PDBsum" id="3MMP"/>
<dbReference type="PDBsum" id="3VNU"/>
<dbReference type="PDBsum" id="3VNV"/>
<dbReference type="PDBsum" id="4FWT"/>
<dbReference type="PDBsum" id="4R71"/>
<dbReference type="PDBsum" id="4V6K"/>
<dbReference type="PDBsum" id="4V6L"/>
<dbReference type="PDBsum" id="5AFI"/>
<dbReference type="PDBsum" id="5I4R"/>
<dbReference type="PDBsum" id="5WDT"/>
<dbReference type="PDBsum" id="5WE4"/>
<dbReference type="PDBsum" id="5WE6"/>
<dbReference type="PDBsum" id="5WF0"/>
<dbReference type="PDBsum" id="5WFK"/>
<dbReference type="PDBsum" id="5WFS"/>
<dbReference type="PDBsum" id="6EZE"/>
<dbReference type="PDBsum" id="7ABZ"/>
<dbReference type="PDBsum" id="7VMC"/>
<dbReference type="PDBsum" id="8G7Q"/>
<dbReference type="PDBsum" id="8QFS"/>
<dbReference type="PDBsum" id="8QHC"/>
<dbReference type="EMDB" id="EMD-1055"/>
<dbReference type="EMDB" id="EMD-11710"/>
<dbReference type="EMDB" id="EMD-1849"/>
<dbReference type="EMDB" id="EMD-1850"/>
<dbReference type="EMDB" id="EMD-2847"/>
<dbReference type="EMDB" id="EMD-8813"/>
<dbReference type="EMDB" id="EMD-8814"/>
<dbReference type="EMDB" id="EMD-8815"/>
<dbReference type="EMDB" id="EMD-8828"/>
<dbReference type="SMR" id="P0CE48"/>
<dbReference type="BioGRID" id="4261400">
    <property type="interactions" value="35"/>
</dbReference>
<dbReference type="BioGRID" id="852776">
    <property type="interactions" value="3"/>
</dbReference>
<dbReference type="ComplexPortal" id="CPX-2853">
    <property type="entry name" value="Elongation Factor TU-TS, tufB variant"/>
</dbReference>
<dbReference type="DIP" id="DIP-60620N"/>
<dbReference type="FunCoup" id="P0CE48">
    <property type="interactions" value="925"/>
</dbReference>
<dbReference type="IntAct" id="P0CE48">
    <property type="interactions" value="160"/>
</dbReference>
<dbReference type="STRING" id="511145.b3980"/>
<dbReference type="iPTMnet" id="P0CE48"/>
<dbReference type="jPOST" id="P0CE48"/>
<dbReference type="PaxDb" id="511145-b3980"/>
<dbReference type="EnsemblBacteria" id="AAC76954">
    <property type="protein sequence ID" value="AAC76954"/>
    <property type="gene ID" value="b3980"/>
</dbReference>
<dbReference type="GeneID" id="948482"/>
<dbReference type="KEGG" id="ecj:JW3943"/>
<dbReference type="KEGG" id="eco:b3980"/>
<dbReference type="KEGG" id="ecoc:C3026_21500"/>
<dbReference type="PATRIC" id="fig|1411691.4.peg.2732"/>
<dbReference type="EchoBASE" id="EB1030"/>
<dbReference type="eggNOG" id="COG0050">
    <property type="taxonomic scope" value="Bacteria"/>
</dbReference>
<dbReference type="HOGENOM" id="CLU_007265_0_2_6"/>
<dbReference type="InParanoid" id="P0CE48"/>
<dbReference type="OMA" id="EGDKEWG"/>
<dbReference type="OrthoDB" id="9803139at2"/>
<dbReference type="PhylomeDB" id="P0CE48"/>
<dbReference type="BioCyc" id="EcoCyc:EG11037-MONOMER"/>
<dbReference type="BRENDA" id="3.6.5.3">
    <property type="organism ID" value="2026"/>
</dbReference>
<dbReference type="EvolutionaryTrace" id="P0CE48"/>
<dbReference type="PRO" id="PR:P0CE48"/>
<dbReference type="Proteomes" id="UP000000625">
    <property type="component" value="Chromosome"/>
</dbReference>
<dbReference type="GO" id="GO:0005737">
    <property type="term" value="C:cytoplasm"/>
    <property type="evidence" value="ECO:0007669"/>
    <property type="project" value="UniProtKB-SubCell"/>
</dbReference>
<dbReference type="GO" id="GO:0032045">
    <property type="term" value="C:guanyl-nucleotide exchange factor complex"/>
    <property type="evidence" value="ECO:0000353"/>
    <property type="project" value="ComplexPortal"/>
</dbReference>
<dbReference type="GO" id="GO:0005886">
    <property type="term" value="C:plasma membrane"/>
    <property type="evidence" value="ECO:0007669"/>
    <property type="project" value="UniProtKB-SubCell"/>
</dbReference>
<dbReference type="GO" id="GO:0005525">
    <property type="term" value="F:GTP binding"/>
    <property type="evidence" value="ECO:0007669"/>
    <property type="project" value="UniProtKB-UniRule"/>
</dbReference>
<dbReference type="GO" id="GO:0003924">
    <property type="term" value="F:GTPase activity"/>
    <property type="evidence" value="ECO:0007669"/>
    <property type="project" value="InterPro"/>
</dbReference>
<dbReference type="GO" id="GO:0097216">
    <property type="term" value="F:guanosine tetraphosphate binding"/>
    <property type="evidence" value="ECO:0000314"/>
    <property type="project" value="EcoCyc"/>
</dbReference>
<dbReference type="GO" id="GO:0003723">
    <property type="term" value="F:RNA binding"/>
    <property type="evidence" value="ECO:0007669"/>
    <property type="project" value="UniProtKB-KW"/>
</dbReference>
<dbReference type="GO" id="GO:0003746">
    <property type="term" value="F:translation elongation factor activity"/>
    <property type="evidence" value="ECO:0000318"/>
    <property type="project" value="GO_Central"/>
</dbReference>
<dbReference type="GO" id="GO:0046677">
    <property type="term" value="P:response to antibiotic"/>
    <property type="evidence" value="ECO:0007669"/>
    <property type="project" value="UniProtKB-KW"/>
</dbReference>
<dbReference type="GO" id="GO:0006414">
    <property type="term" value="P:translational elongation"/>
    <property type="evidence" value="ECO:0000318"/>
    <property type="project" value="GO_Central"/>
</dbReference>
<dbReference type="CDD" id="cd01884">
    <property type="entry name" value="EF_Tu"/>
    <property type="match status" value="1"/>
</dbReference>
<dbReference type="CDD" id="cd03697">
    <property type="entry name" value="EFTU_II"/>
    <property type="match status" value="1"/>
</dbReference>
<dbReference type="CDD" id="cd03707">
    <property type="entry name" value="EFTU_III"/>
    <property type="match status" value="1"/>
</dbReference>
<dbReference type="DisProt" id="DP01965"/>
<dbReference type="FunFam" id="2.40.30.10:FF:000001">
    <property type="entry name" value="Elongation factor Tu"/>
    <property type="match status" value="1"/>
</dbReference>
<dbReference type="FunFam" id="3.40.50.300:FF:000003">
    <property type="entry name" value="Elongation factor Tu"/>
    <property type="match status" value="1"/>
</dbReference>
<dbReference type="Gene3D" id="3.40.50.300">
    <property type="entry name" value="P-loop containing nucleotide triphosphate hydrolases"/>
    <property type="match status" value="1"/>
</dbReference>
<dbReference type="Gene3D" id="2.40.30.10">
    <property type="entry name" value="Translation factors"/>
    <property type="match status" value="2"/>
</dbReference>
<dbReference type="HAMAP" id="MF_00118_B">
    <property type="entry name" value="EF_Tu_B"/>
    <property type="match status" value="1"/>
</dbReference>
<dbReference type="InterPro" id="IPR041709">
    <property type="entry name" value="EF-Tu_GTP-bd"/>
</dbReference>
<dbReference type="InterPro" id="IPR050055">
    <property type="entry name" value="EF-Tu_GTPase"/>
</dbReference>
<dbReference type="InterPro" id="IPR004161">
    <property type="entry name" value="EFTu-like_2"/>
</dbReference>
<dbReference type="InterPro" id="IPR033720">
    <property type="entry name" value="EFTU_2"/>
</dbReference>
<dbReference type="InterPro" id="IPR031157">
    <property type="entry name" value="G_TR_CS"/>
</dbReference>
<dbReference type="InterPro" id="IPR027417">
    <property type="entry name" value="P-loop_NTPase"/>
</dbReference>
<dbReference type="InterPro" id="IPR005225">
    <property type="entry name" value="Small_GTP-bd"/>
</dbReference>
<dbReference type="InterPro" id="IPR000795">
    <property type="entry name" value="T_Tr_GTP-bd_dom"/>
</dbReference>
<dbReference type="InterPro" id="IPR009000">
    <property type="entry name" value="Transl_B-barrel_sf"/>
</dbReference>
<dbReference type="InterPro" id="IPR009001">
    <property type="entry name" value="Transl_elong_EF1A/Init_IF2_C"/>
</dbReference>
<dbReference type="InterPro" id="IPR004541">
    <property type="entry name" value="Transl_elong_EFTu/EF1A_bac/org"/>
</dbReference>
<dbReference type="InterPro" id="IPR004160">
    <property type="entry name" value="Transl_elong_EFTu/EF1A_C"/>
</dbReference>
<dbReference type="NCBIfam" id="TIGR00485">
    <property type="entry name" value="EF-Tu"/>
    <property type="match status" value="1"/>
</dbReference>
<dbReference type="NCBIfam" id="NF000766">
    <property type="entry name" value="PRK00049.1"/>
    <property type="match status" value="1"/>
</dbReference>
<dbReference type="NCBIfam" id="NF009372">
    <property type="entry name" value="PRK12735.1"/>
    <property type="match status" value="1"/>
</dbReference>
<dbReference type="NCBIfam" id="NF009373">
    <property type="entry name" value="PRK12736.1"/>
    <property type="match status" value="1"/>
</dbReference>
<dbReference type="NCBIfam" id="TIGR00231">
    <property type="entry name" value="small_GTP"/>
    <property type="match status" value="1"/>
</dbReference>
<dbReference type="PANTHER" id="PTHR43721:SF22">
    <property type="entry name" value="ELONGATION FACTOR TU, MITOCHONDRIAL"/>
    <property type="match status" value="1"/>
</dbReference>
<dbReference type="PANTHER" id="PTHR43721">
    <property type="entry name" value="ELONGATION FACTOR TU-RELATED"/>
    <property type="match status" value="1"/>
</dbReference>
<dbReference type="Pfam" id="PF00009">
    <property type="entry name" value="GTP_EFTU"/>
    <property type="match status" value="1"/>
</dbReference>
<dbReference type="Pfam" id="PF03144">
    <property type="entry name" value="GTP_EFTU_D2"/>
    <property type="match status" value="1"/>
</dbReference>
<dbReference type="Pfam" id="PF03143">
    <property type="entry name" value="GTP_EFTU_D3"/>
    <property type="match status" value="1"/>
</dbReference>
<dbReference type="PRINTS" id="PR00315">
    <property type="entry name" value="ELONGATNFCT"/>
</dbReference>
<dbReference type="SUPFAM" id="SSF50465">
    <property type="entry name" value="EF-Tu/eEF-1alpha/eIF2-gamma C-terminal domain"/>
    <property type="match status" value="1"/>
</dbReference>
<dbReference type="SUPFAM" id="SSF52540">
    <property type="entry name" value="P-loop containing nucleoside triphosphate hydrolases"/>
    <property type="match status" value="1"/>
</dbReference>
<dbReference type="SUPFAM" id="SSF50447">
    <property type="entry name" value="Translation proteins"/>
    <property type="match status" value="1"/>
</dbReference>
<dbReference type="PROSITE" id="PS00301">
    <property type="entry name" value="G_TR_1"/>
    <property type="match status" value="1"/>
</dbReference>
<dbReference type="PROSITE" id="PS51722">
    <property type="entry name" value="G_TR_2"/>
    <property type="match status" value="1"/>
</dbReference>
<name>EFTU2_ECOLI</name>
<organism>
    <name type="scientific">Escherichia coli (strain K12)</name>
    <dbReference type="NCBI Taxonomy" id="83333"/>
    <lineage>
        <taxon>Bacteria</taxon>
        <taxon>Pseudomonadati</taxon>
        <taxon>Pseudomonadota</taxon>
        <taxon>Gammaproteobacteria</taxon>
        <taxon>Enterobacterales</taxon>
        <taxon>Enterobacteriaceae</taxon>
        <taxon>Escherichia</taxon>
    </lineage>
</organism>
<feature type="initiator methionine" description="Removed" evidence="21 22">
    <location>
        <position position="1"/>
    </location>
</feature>
<feature type="chain" id="PRO_0000392289" description="Elongation factor Tu 2">
    <location>
        <begin position="2"/>
        <end position="394"/>
    </location>
</feature>
<feature type="domain" description="tr-type G">
    <location>
        <begin position="10"/>
        <end position="204"/>
    </location>
</feature>
<feature type="region of interest" description="G1" evidence="1">
    <location>
        <begin position="19"/>
        <end position="26"/>
    </location>
</feature>
<feature type="region of interest" description="G2" evidence="1">
    <location>
        <begin position="60"/>
        <end position="64"/>
    </location>
</feature>
<feature type="region of interest" description="G3" evidence="1">
    <location>
        <begin position="81"/>
        <end position="84"/>
    </location>
</feature>
<feature type="region of interest" description="G4" evidence="1">
    <location>
        <begin position="136"/>
        <end position="139"/>
    </location>
</feature>
<feature type="region of interest" description="G5" evidence="1">
    <location>
        <begin position="174"/>
        <end position="176"/>
    </location>
</feature>
<feature type="binding site">
    <location>
        <begin position="19"/>
        <end position="26"/>
    </location>
    <ligand>
        <name>GTP</name>
        <dbReference type="ChEBI" id="CHEBI:37565"/>
    </ligand>
</feature>
<feature type="binding site" evidence="3">
    <location>
        <position position="26"/>
    </location>
    <ligand>
        <name>Mg(2+)</name>
        <dbReference type="ChEBI" id="CHEBI:18420"/>
    </ligand>
</feature>
<feature type="binding site">
    <location>
        <begin position="81"/>
        <end position="85"/>
    </location>
    <ligand>
        <name>GTP</name>
        <dbReference type="ChEBI" id="CHEBI:37565"/>
    </ligand>
</feature>
<feature type="binding site">
    <location>
        <begin position="136"/>
        <end position="139"/>
    </location>
    <ligand>
        <name>GTP</name>
        <dbReference type="ChEBI" id="CHEBI:37565"/>
    </ligand>
</feature>
<feature type="modified residue" description="N-acetylserine" evidence="21 22">
    <location>
        <position position="2"/>
    </location>
</feature>
<feature type="modified residue" description="N6-succinyllysine" evidence="11">
    <location>
        <position position="38"/>
    </location>
</feature>
<feature type="modified residue" description="N6,N6-dimethyllysine; alternate" evidence="8 20 21 22">
    <location>
        <position position="57"/>
    </location>
</feature>
<feature type="modified residue" description="N6-methyllysine; alternate" evidence="8 20 21 22">
    <location>
        <position position="57"/>
    </location>
</feature>
<feature type="modified residue" description="N6-succinyllysine" evidence="11">
    <location>
        <position position="177"/>
    </location>
</feature>
<feature type="modified residue" description="N6-succinyllysine" evidence="11">
    <location>
        <position position="249"/>
    </location>
</feature>
<feature type="modified residue" description="N6-succinyllysine" evidence="11">
    <location>
        <position position="253"/>
    </location>
</feature>
<feature type="modified residue" description="N6-succinyllysine" evidence="11">
    <location>
        <position position="295"/>
    </location>
</feature>
<feature type="modified residue" description="N6-acetyllysine; alternate" evidence="6">
    <location>
        <position position="314"/>
    </location>
</feature>
<feature type="modified residue" description="N6-succinyllysine; alternate" evidence="11">
    <location>
        <position position="314"/>
    </location>
</feature>
<feature type="modified residue" description="Phosphothreonine" evidence="30 31 33">
    <location>
        <position position="383"/>
    </location>
</feature>
<feature type="mutagenesis site" description="No change in binding GDP and 3-fold reduction in binding EF-Ts." evidence="27">
    <original>H</original>
    <variation>A</variation>
    <location>
        <position position="20"/>
    </location>
</feature>
<feature type="mutagenesis site" description="Weaker binding for GDP and for EF-Ts." evidence="27">
    <original>Q</original>
    <variation>A</variation>
    <location>
        <position position="115"/>
    </location>
</feature>
<feature type="mutagenesis site" description="Reduces affinity for GDP." evidence="16">
    <original>K</original>
    <variation>R</variation>
    <variation>Q</variation>
    <variation>E</variation>
    <variation>I</variation>
    <location>
        <position position="137"/>
    </location>
</feature>
<feature type="mutagenesis site" description="Reduces affinity for GDP; increases affinity for XDP." evidence="19">
    <original>D</original>
    <variation>N</variation>
    <location>
        <position position="139"/>
    </location>
</feature>
<feature type="mutagenesis site" description="Inhibits codon-induced conformational changes leading to GTPase activation on the ribosome." evidence="17">
    <original>G</original>
    <variation>D</variation>
    <location>
        <position position="223"/>
    </location>
</feature>
<feature type="mutagenesis site" description="Still associates with EF-Ts, no longer forms the Qbeta viral RNA polymerase complex." evidence="10">
    <location>
        <begin position="262"/>
        <end position="263"/>
    </location>
</feature>
<feature type="mutagenesis site" description="Still associates with EF-Ts, very little Qbeta viral RNA polymerase complex forms." evidence="10">
    <original>F</original>
    <variation>A</variation>
    <location>
        <position position="262"/>
    </location>
</feature>
<feature type="mutagenesis site" description="50% loss of Qbeta viral RNA polymerase activity." evidence="12">
    <original>R</original>
    <variation>A</variation>
    <location>
        <position position="289"/>
    </location>
</feature>
<feature type="mutagenesis site" description="No change in binding GDP but higher binding constant for EF-Ts." evidence="27">
    <original>E</original>
    <variation>A</variation>
    <location>
        <position position="349"/>
    </location>
</feature>
<feature type="mutagenesis site" description="60% loss of Qbeta viral RNA polymerase elongation activity." evidence="12">
    <original>R</original>
    <variation>A</variation>
    <location>
        <position position="378"/>
    </location>
</feature>
<feature type="mutagenesis site" description="25% loss of Qbeta viral RNA polymerase elongation activity." evidence="12">
    <original>R</original>
    <variation>A</variation>
    <location>
        <position position="382"/>
    </location>
</feature>
<feature type="mutagenesis site" description="No longer phosphorylated by phage protein doc." evidence="15">
    <original>T</original>
    <variation>V</variation>
    <location>
        <position position="383"/>
    </location>
</feature>
<feature type="helix" evidence="35">
    <location>
        <begin position="3"/>
        <end position="7"/>
    </location>
</feature>
<feature type="strand" evidence="34">
    <location>
        <begin position="12"/>
        <end position="18"/>
    </location>
</feature>
<feature type="helix" evidence="35">
    <location>
        <begin position="21"/>
        <end position="23"/>
    </location>
</feature>
<feature type="helix" evidence="34">
    <location>
        <begin position="25"/>
        <end position="40"/>
    </location>
</feature>
<feature type="helix" evidence="36">
    <location>
        <begin position="47"/>
        <end position="51"/>
    </location>
</feature>
<feature type="strand" evidence="36">
    <location>
        <begin position="55"/>
        <end position="60"/>
    </location>
</feature>
<feature type="helix" evidence="34">
    <location>
        <begin position="61"/>
        <end position="63"/>
    </location>
</feature>
<feature type="strand" evidence="34">
    <location>
        <begin position="67"/>
        <end position="71"/>
    </location>
</feature>
<feature type="strand" evidence="34">
    <location>
        <begin position="76"/>
        <end position="81"/>
    </location>
</feature>
<feature type="helix" evidence="34">
    <location>
        <begin position="86"/>
        <end position="88"/>
    </location>
</feature>
<feature type="helix" evidence="34">
    <location>
        <begin position="89"/>
        <end position="96"/>
    </location>
</feature>
<feature type="strand" evidence="34">
    <location>
        <begin position="102"/>
        <end position="107"/>
    </location>
</feature>
<feature type="turn" evidence="34">
    <location>
        <begin position="108"/>
        <end position="110"/>
    </location>
</feature>
<feature type="helix" evidence="34">
    <location>
        <begin position="114"/>
        <end position="126"/>
    </location>
</feature>
<feature type="strand" evidence="34">
    <location>
        <begin position="131"/>
        <end position="136"/>
    </location>
</feature>
<feature type="helix" evidence="34">
    <location>
        <begin position="138"/>
        <end position="140"/>
    </location>
</feature>
<feature type="helix" evidence="34">
    <location>
        <begin position="144"/>
        <end position="160"/>
    </location>
</feature>
<feature type="turn" evidence="34">
    <location>
        <begin position="165"/>
        <end position="167"/>
    </location>
</feature>
<feature type="strand" evidence="34">
    <location>
        <begin position="170"/>
        <end position="172"/>
    </location>
</feature>
<feature type="helix" evidence="34">
    <location>
        <begin position="175"/>
        <end position="179"/>
    </location>
</feature>
<feature type="helix" evidence="34">
    <location>
        <begin position="183"/>
        <end position="199"/>
    </location>
</feature>
<feature type="helix" evidence="36">
    <location>
        <begin position="206"/>
        <end position="208"/>
    </location>
</feature>
<feature type="strand" evidence="34">
    <location>
        <begin position="212"/>
        <end position="214"/>
    </location>
</feature>
<feature type="strand" evidence="34">
    <location>
        <begin position="218"/>
        <end position="221"/>
    </location>
</feature>
<feature type="turn" evidence="34">
    <location>
        <begin position="222"/>
        <end position="224"/>
    </location>
</feature>
<feature type="strand" evidence="34">
    <location>
        <begin position="225"/>
        <end position="231"/>
    </location>
</feature>
<feature type="strand" evidence="34">
    <location>
        <begin position="234"/>
        <end position="238"/>
    </location>
</feature>
<feature type="strand" evidence="34">
    <location>
        <begin position="242"/>
        <end position="249"/>
    </location>
</feature>
<feature type="strand" evidence="34">
    <location>
        <begin position="252"/>
        <end position="261"/>
    </location>
</feature>
<feature type="strand" evidence="34">
    <location>
        <begin position="264"/>
        <end position="270"/>
    </location>
</feature>
<feature type="strand" evidence="34">
    <location>
        <begin position="274"/>
        <end position="281"/>
    </location>
</feature>
<feature type="helix" evidence="34">
    <location>
        <begin position="284"/>
        <end position="286"/>
    </location>
</feature>
<feature type="strand" evidence="34">
    <location>
        <begin position="292"/>
        <end position="295"/>
    </location>
</feature>
<feature type="strand" evidence="34">
    <location>
        <begin position="300"/>
        <end position="311"/>
    </location>
</feature>
<feature type="helix" evidence="34">
    <location>
        <begin position="314"/>
        <end position="316"/>
    </location>
</feature>
<feature type="strand" evidence="34">
    <location>
        <begin position="330"/>
        <end position="333"/>
    </location>
</feature>
<feature type="strand" evidence="34">
    <location>
        <begin position="336"/>
        <end position="343"/>
    </location>
</feature>
<feature type="strand" evidence="34">
    <location>
        <begin position="356"/>
        <end position="369"/>
    </location>
</feature>
<feature type="strand" evidence="34">
    <location>
        <begin position="374"/>
        <end position="379"/>
    </location>
</feature>
<feature type="strand" evidence="34">
    <location>
        <begin position="382"/>
        <end position="392"/>
    </location>
</feature>
<proteinExistence type="evidence at protein level"/>
<sequence>MSKEKFERTKPHVNVGTIGHVDHGKTTLTAAITTVLAKTYGGAARAFDQIDNAPEEKARGITINTSHVEYDTPTRHYAHVDCPGHADYVKNMITGAAQMDGAILVVAATDGPMPQTREHILLGRQVGVPYIIVFLNKCDMVDDEELLELVEMEVRELLSQYDFPGDDTPIVRGSALKALEGDAEWEAKILELAGFLDSYIPEPERAIDKPFLLPIEDVFSISGRGTVVTGRVERGIIKVGEEVEIVGIKETQKSTCTGVEMFRKLLDEGRAGENVGVLLRGIKREEIERGQVLAKPGTIKPHTKFESEVYILSKDEGGRHTPFFKGYRPQFYFRTTDVTGTIELPEGVEMVMPGDNIKMVVTLIHPIAMDDGLRFAIREGGRTVGAGVVAKVLS</sequence>
<protein>
    <recommendedName>
        <fullName evidence="3">Elongation factor Tu 2</fullName>
        <shortName evidence="3">EF-Tu 2</shortName>
        <ecNumber evidence="3">3.6.5.3</ecNumber>
    </recommendedName>
    <alternativeName>
        <fullName evidence="28">Bacteriophage Q beta RNA-directed RNA polymerase subunit III</fullName>
    </alternativeName>
    <alternativeName>
        <fullName>P-43</fullName>
    </alternativeName>
</protein>